<name>OOSP3_MOUSE</name>
<accession>G5E8D7</accession>
<accession>B9EIY2</accession>
<feature type="signal peptide" evidence="1">
    <location>
        <begin position="1"/>
        <end position="21"/>
    </location>
</feature>
<feature type="chain" id="PRO_5015091897" description="Oocyte-secreted protein 3" evidence="1">
    <location>
        <begin position="22"/>
        <end position="195"/>
    </location>
</feature>
<feature type="glycosylation site" description="N-linked (GlcNAc...) asparagine" evidence="2">
    <location>
        <position position="102"/>
    </location>
</feature>
<feature type="sequence conflict" description="In Ref. 3; AAI41229." evidence="4" ref="3">
    <original>E</original>
    <variation>K</variation>
    <location>
        <position position="135"/>
    </location>
</feature>
<reference key="1">
    <citation type="journal article" date="2009" name="PLoS Biol.">
        <title>Lineage-specific biology revealed by a finished genome assembly of the mouse.</title>
        <authorList>
            <person name="Church D.M."/>
            <person name="Goodstadt L."/>
            <person name="Hillier L.W."/>
            <person name="Zody M.C."/>
            <person name="Goldstein S."/>
            <person name="She X."/>
            <person name="Bult C.J."/>
            <person name="Agarwala R."/>
            <person name="Cherry J.L."/>
            <person name="DiCuccio M."/>
            <person name="Hlavina W."/>
            <person name="Kapustin Y."/>
            <person name="Meric P."/>
            <person name="Maglott D."/>
            <person name="Birtle Z."/>
            <person name="Marques A.C."/>
            <person name="Graves T."/>
            <person name="Zhou S."/>
            <person name="Teague B."/>
            <person name="Potamousis K."/>
            <person name="Churas C."/>
            <person name="Place M."/>
            <person name="Herschleb J."/>
            <person name="Runnheim R."/>
            <person name="Forrest D."/>
            <person name="Amos-Landgraf J."/>
            <person name="Schwartz D.C."/>
            <person name="Cheng Z."/>
            <person name="Lindblad-Toh K."/>
            <person name="Eichler E.E."/>
            <person name="Ponting C.P."/>
        </authorList>
    </citation>
    <scope>NUCLEOTIDE SEQUENCE [LARGE SCALE GENOMIC DNA]</scope>
    <source>
        <strain>C57BL/6J</strain>
    </source>
</reference>
<reference key="2">
    <citation type="submission" date="2005-07" db="EMBL/GenBank/DDBJ databases">
        <authorList>
            <person name="Mural R.J."/>
            <person name="Adams M.D."/>
            <person name="Myers E.W."/>
            <person name="Smith H.O."/>
            <person name="Venter J.C."/>
        </authorList>
    </citation>
    <scope>NUCLEOTIDE SEQUENCE [LARGE SCALE GENOMIC DNA]</scope>
</reference>
<reference key="3">
    <citation type="journal article" date="2004" name="Genome Res.">
        <title>The status, quality, and expansion of the NIH full-length cDNA project: the Mammalian Gene Collection (MGC).</title>
        <authorList>
            <consortium name="The MGC Project Team"/>
        </authorList>
    </citation>
    <scope>NUCLEOTIDE SEQUENCE [LARGE SCALE MRNA]</scope>
    <source>
        <tissue>Brain</tissue>
    </source>
</reference>
<reference key="4">
    <citation type="journal article" date="2002" name="Biochem. Biophys. Res. Commun.">
        <title>IF3, a novel cell-differentiation factor, highly expressed in murine liver and ovary.</title>
        <authorList>
            <person name="Mano H."/>
            <person name="Nakatani S."/>
            <person name="Aoyagi R."/>
            <person name="Ishii R."/>
            <person name="Iwai Y."/>
            <person name="Shimoda N."/>
            <person name="Jincho Y."/>
            <person name="Hiura H."/>
            <person name="Hirose M."/>
            <person name="Mochizuki C."/>
            <person name="Yuri M."/>
            <person name="Hyock Im R."/>
            <person name="Funada-Wada U."/>
            <person name="Wada M."/>
        </authorList>
    </citation>
    <scope>TISSUE SPECIFICITY</scope>
</reference>
<organism>
    <name type="scientific">Mus musculus</name>
    <name type="common">Mouse</name>
    <dbReference type="NCBI Taxonomy" id="10090"/>
    <lineage>
        <taxon>Eukaryota</taxon>
        <taxon>Metazoa</taxon>
        <taxon>Chordata</taxon>
        <taxon>Craniata</taxon>
        <taxon>Vertebrata</taxon>
        <taxon>Euteleostomi</taxon>
        <taxon>Mammalia</taxon>
        <taxon>Eutheria</taxon>
        <taxon>Euarchontoglires</taxon>
        <taxon>Glires</taxon>
        <taxon>Rodentia</taxon>
        <taxon>Myomorpha</taxon>
        <taxon>Muroidea</taxon>
        <taxon>Muridae</taxon>
        <taxon>Murinae</taxon>
        <taxon>Mus</taxon>
        <taxon>Mus</taxon>
    </lineage>
</organism>
<evidence type="ECO:0000255" key="1"/>
<evidence type="ECO:0000255" key="2">
    <source>
        <dbReference type="PROSITE-ProRule" id="PRU00498"/>
    </source>
</evidence>
<evidence type="ECO:0000269" key="3">
    <source>
    </source>
</evidence>
<evidence type="ECO:0000305" key="4"/>
<evidence type="ECO:0000312" key="5">
    <source>
        <dbReference type="MGI" id="MGI:2684943"/>
    </source>
</evidence>
<sequence length="195" mass="22638">MKAFVASGLLLLIFGMWRCSGIEPVSMECDYFTFRVIAKRALFYPDDLIGPDELLLGASCPVTSIRPDELEFYYDIHSCGTFIQHAFDGTIVNTWLTYMPRNISIYAELQLQCVIPRISQDELDNKQSSDECVGESESIDVGNLDFHPPPQCWFLVLKRYCIICGHFHFPNNWLIPYHGWKDESFQRLWPSLFHR</sequence>
<gene>
    <name evidence="5" type="primary">Oosp3</name>
</gene>
<proteinExistence type="evidence at transcript level"/>
<comment type="subcellular location">
    <subcellularLocation>
        <location evidence="4">Secreted</location>
    </subcellularLocation>
</comment>
<comment type="tissue specificity">
    <text evidence="3">Oocyte-specific.</text>
</comment>
<comment type="similarity">
    <text evidence="4">Belongs to the PLAC1 family.</text>
</comment>
<keyword id="KW-0325">Glycoprotein</keyword>
<keyword id="KW-1185">Reference proteome</keyword>
<keyword id="KW-0964">Secreted</keyword>
<keyword id="KW-0732">Signal</keyword>
<dbReference type="EMBL" id="AC127289">
    <property type="status" value="NOT_ANNOTATED_CDS"/>
    <property type="molecule type" value="Genomic_DNA"/>
</dbReference>
<dbReference type="EMBL" id="CH466534">
    <property type="protein sequence ID" value="EDL41438.1"/>
    <property type="molecule type" value="Genomic_DNA"/>
</dbReference>
<dbReference type="EMBL" id="BC141228">
    <property type="protein sequence ID" value="AAI41229.1"/>
    <property type="molecule type" value="mRNA"/>
</dbReference>
<dbReference type="CCDS" id="CCDS29608.1"/>
<dbReference type="RefSeq" id="NP_001028455.2">
    <property type="nucleotide sequence ID" value="NM_001033283.2"/>
</dbReference>
<dbReference type="SMR" id="G5E8D7"/>
<dbReference type="STRING" id="10090.ENSMUSP00000064913"/>
<dbReference type="GlyCosmos" id="G5E8D7">
    <property type="glycosylation" value="1 site, No reported glycans"/>
</dbReference>
<dbReference type="GlyGen" id="G5E8D7">
    <property type="glycosylation" value="1 site"/>
</dbReference>
<dbReference type="PaxDb" id="10090-ENSMUSP00000064913"/>
<dbReference type="Ensembl" id="ENSMUST00000069760.13">
    <property type="protein sequence ID" value="ENSMUSP00000064913.7"/>
    <property type="gene ID" value="ENSMUSG00000055933.14"/>
</dbReference>
<dbReference type="GeneID" id="225923"/>
<dbReference type="KEGG" id="mmu:225923"/>
<dbReference type="UCSC" id="uc008gsv.1">
    <property type="organism name" value="mouse"/>
</dbReference>
<dbReference type="AGR" id="MGI:2684943"/>
<dbReference type="CTD" id="112577461"/>
<dbReference type="MGI" id="MGI:2684943">
    <property type="gene designation" value="Oosp3"/>
</dbReference>
<dbReference type="VEuPathDB" id="HostDB:ENSMUSG00000055933"/>
<dbReference type="eggNOG" id="ENOG502TESX">
    <property type="taxonomic scope" value="Eukaryota"/>
</dbReference>
<dbReference type="GeneTree" id="ENSGT01030000234567"/>
<dbReference type="HOGENOM" id="CLU_1405388_0_0_1"/>
<dbReference type="InParanoid" id="G5E8D7"/>
<dbReference type="OMA" id="WRCSGIE"/>
<dbReference type="OrthoDB" id="9450704at2759"/>
<dbReference type="PhylomeDB" id="G5E8D7"/>
<dbReference type="TreeFam" id="TF338479"/>
<dbReference type="BioGRID-ORCS" id="225923">
    <property type="hits" value="2 hits in 78 CRISPR screens"/>
</dbReference>
<dbReference type="ChiTaRS" id="Oosp3">
    <property type="organism name" value="mouse"/>
</dbReference>
<dbReference type="PRO" id="PR:G5E8D7"/>
<dbReference type="Proteomes" id="UP000000589">
    <property type="component" value="Chromosome 19"/>
</dbReference>
<dbReference type="RNAct" id="G5E8D7">
    <property type="molecule type" value="protein"/>
</dbReference>
<dbReference type="Bgee" id="ENSMUSG00000055933">
    <property type="expression patterns" value="Expressed in animal zygote and 13 other cell types or tissues"/>
</dbReference>
<dbReference type="ExpressionAtlas" id="G5E8D7">
    <property type="expression patterns" value="baseline and differential"/>
</dbReference>
<dbReference type="GO" id="GO:0005576">
    <property type="term" value="C:extracellular region"/>
    <property type="evidence" value="ECO:0007669"/>
    <property type="project" value="UniProtKB-SubCell"/>
</dbReference>
<dbReference type="Gene3D" id="2.60.40.3210">
    <property type="entry name" value="Zona pellucida, ZP-N domain"/>
    <property type="match status" value="1"/>
</dbReference>
<dbReference type="InterPro" id="IPR033222">
    <property type="entry name" value="PLAC1_fam"/>
</dbReference>
<dbReference type="PANTHER" id="PTHR14380:SF8">
    <property type="entry name" value="OOCYTE-SECRETED PROTEIN 3"/>
    <property type="match status" value="1"/>
</dbReference>
<dbReference type="PANTHER" id="PTHR14380">
    <property type="entry name" value="PLACENTA-SPECIFIC PROTEIN 1"/>
    <property type="match status" value="1"/>
</dbReference>
<protein>
    <recommendedName>
        <fullName evidence="4">Oocyte-secreted protein 3</fullName>
    </recommendedName>
</protein>